<comment type="catalytic activity">
    <reaction>
        <text>glucuronate acceptor + UDP-alpha-D-glucuronate = acceptor beta-D-glucuronoside + UDP + H(+)</text>
        <dbReference type="Rhea" id="RHEA:21032"/>
        <dbReference type="ChEBI" id="CHEBI:15378"/>
        <dbReference type="ChEBI" id="CHEBI:58052"/>
        <dbReference type="ChEBI" id="CHEBI:58223"/>
        <dbReference type="ChEBI" id="CHEBI:132367"/>
        <dbReference type="ChEBI" id="CHEBI:132368"/>
        <dbReference type="EC" id="2.4.1.17"/>
    </reaction>
</comment>
<comment type="subunit">
    <text evidence="3">Interacts with cmd-1 in the presence of Ca(2+).</text>
</comment>
<comment type="subcellular location">
    <subcellularLocation>
        <location evidence="4">Membrane</location>
        <topology evidence="4">Single-pass membrane protein</topology>
    </subcellularLocation>
</comment>
<comment type="similarity">
    <text evidence="4">Belongs to the UDP-glycosyltransferase family.</text>
</comment>
<feature type="signal peptide" evidence="1">
    <location>
        <begin position="1"/>
        <end position="17"/>
    </location>
</feature>
<feature type="chain" id="PRO_0000036054" description="Putative UDP-glucuronosyltransferase ugt-48">
    <location>
        <begin position="18"/>
        <end position="526"/>
    </location>
</feature>
<feature type="transmembrane region" description="Helical" evidence="1">
    <location>
        <begin position="489"/>
        <end position="509"/>
    </location>
</feature>
<feature type="glycosylation site" description="N-linked (GlcNAc...) asparagine" evidence="2">
    <location>
        <position position="58"/>
    </location>
</feature>
<feature type="glycosylation site" description="N-linked (GlcNAc...) asparagine" evidence="1">
    <location>
        <position position="305"/>
    </location>
</feature>
<feature type="glycosylation site" description="N-linked (GlcNAc...) asparagine" evidence="1">
    <location>
        <position position="513"/>
    </location>
</feature>
<name>UGT48_CAEEL</name>
<gene>
    <name type="primary">ugt-48</name>
    <name type="synonym">ugt15</name>
    <name type="ORF">C18C4.3</name>
</gene>
<reference key="1">
    <citation type="journal article" date="1998" name="Science">
        <title>Genome sequence of the nematode C. elegans: a platform for investigating biology.</title>
        <authorList>
            <consortium name="The C. elegans sequencing consortium"/>
        </authorList>
    </citation>
    <scope>NUCLEOTIDE SEQUENCE [LARGE SCALE GENOMIC DNA]</scope>
    <source>
        <strain>Bristol N2</strain>
    </source>
</reference>
<reference key="2">
    <citation type="journal article" date="2007" name="Mol. Cell. Proteomics">
        <title>Proteomics reveals N-linked glycoprotein diversity in Caenorhabditis elegans and suggests an atypical translocation mechanism for integral membrane proteins.</title>
        <authorList>
            <person name="Kaji H."/>
            <person name="Kamiie J."/>
            <person name="Kawakami H."/>
            <person name="Kido K."/>
            <person name="Yamauchi Y."/>
            <person name="Shinkawa T."/>
            <person name="Taoka M."/>
            <person name="Takahashi N."/>
            <person name="Isobe T."/>
        </authorList>
    </citation>
    <scope>GLYCOSYLATION [LARGE SCALE ANALYSIS] AT ASN-58</scope>
    <scope>IDENTIFICATION BY MASS SPECTROMETRY</scope>
    <source>
        <strain>Bristol N2</strain>
    </source>
</reference>
<reference key="3">
    <citation type="journal article" date="2008" name="Cell Calcium">
        <title>Ca(2+)/Calmodulin-binding proteins from the C. elegans proteome.</title>
        <authorList>
            <person name="Shen X."/>
            <person name="Valencia C.A."/>
            <person name="Gao W."/>
            <person name="Cotten S.W."/>
            <person name="Dong B."/>
            <person name="Huang B.C."/>
            <person name="Liu R."/>
        </authorList>
    </citation>
    <scope>INTERACTION WITH CMD-1</scope>
</reference>
<organism>
    <name type="scientific">Caenorhabditis elegans</name>
    <dbReference type="NCBI Taxonomy" id="6239"/>
    <lineage>
        <taxon>Eukaryota</taxon>
        <taxon>Metazoa</taxon>
        <taxon>Ecdysozoa</taxon>
        <taxon>Nematoda</taxon>
        <taxon>Chromadorea</taxon>
        <taxon>Rhabditida</taxon>
        <taxon>Rhabditina</taxon>
        <taxon>Rhabditomorpha</taxon>
        <taxon>Rhabditoidea</taxon>
        <taxon>Rhabditidae</taxon>
        <taxon>Peloderinae</taxon>
        <taxon>Caenorhabditis</taxon>
    </lineage>
</organism>
<accession>Q18081</accession>
<keyword id="KW-0112">Calmodulin-binding</keyword>
<keyword id="KW-0325">Glycoprotein</keyword>
<keyword id="KW-0328">Glycosyltransferase</keyword>
<keyword id="KW-0472">Membrane</keyword>
<keyword id="KW-1185">Reference proteome</keyword>
<keyword id="KW-0732">Signal</keyword>
<keyword id="KW-0808">Transferase</keyword>
<keyword id="KW-0812">Transmembrane</keyword>
<keyword id="KW-1133">Transmembrane helix</keyword>
<evidence type="ECO:0000255" key="1"/>
<evidence type="ECO:0000269" key="2">
    <source>
    </source>
</evidence>
<evidence type="ECO:0000269" key="3">
    <source>
    </source>
</evidence>
<evidence type="ECO:0000305" key="4"/>
<proteinExistence type="evidence at protein level"/>
<dbReference type="EC" id="2.4.1.17"/>
<dbReference type="EMBL" id="FO080608">
    <property type="protein sequence ID" value="CCD65106.1"/>
    <property type="molecule type" value="Genomic_DNA"/>
</dbReference>
<dbReference type="RefSeq" id="NP_504464.2">
    <property type="nucleotide sequence ID" value="NM_072063.8"/>
</dbReference>
<dbReference type="SMR" id="Q18081"/>
<dbReference type="BioGRID" id="43989">
    <property type="interactions" value="3"/>
</dbReference>
<dbReference type="FunCoup" id="Q18081">
    <property type="interactions" value="175"/>
</dbReference>
<dbReference type="STRING" id="6239.C18C4.3.1"/>
<dbReference type="CAZy" id="GT1">
    <property type="family name" value="Glycosyltransferase Family 1"/>
</dbReference>
<dbReference type="GlyCosmos" id="Q18081">
    <property type="glycosylation" value="3 sites, No reported glycans"/>
</dbReference>
<dbReference type="iPTMnet" id="Q18081"/>
<dbReference type="PaxDb" id="6239-C18C4.3.1"/>
<dbReference type="PeptideAtlas" id="Q18081"/>
<dbReference type="EnsemblMetazoa" id="C18C4.3.1">
    <property type="protein sequence ID" value="C18C4.3.1"/>
    <property type="gene ID" value="WBGene00015965"/>
</dbReference>
<dbReference type="GeneID" id="178940"/>
<dbReference type="KEGG" id="cel:CELE_C18C4.3"/>
<dbReference type="UCSC" id="C18C4.3.1">
    <property type="organism name" value="c. elegans"/>
</dbReference>
<dbReference type="AGR" id="WB:WBGene00015965"/>
<dbReference type="CTD" id="178940"/>
<dbReference type="WormBase" id="C18C4.3">
    <property type="protein sequence ID" value="CE38487"/>
    <property type="gene ID" value="WBGene00015965"/>
    <property type="gene designation" value="ugt-48"/>
</dbReference>
<dbReference type="eggNOG" id="KOG1192">
    <property type="taxonomic scope" value="Eukaryota"/>
</dbReference>
<dbReference type="GeneTree" id="ENSGT00970000196182"/>
<dbReference type="HOGENOM" id="CLU_012949_1_3_1"/>
<dbReference type="InParanoid" id="Q18081"/>
<dbReference type="OMA" id="GWGILRD"/>
<dbReference type="OrthoDB" id="5835829at2759"/>
<dbReference type="PhylomeDB" id="Q18081"/>
<dbReference type="PRO" id="PR:Q18081"/>
<dbReference type="Proteomes" id="UP000001940">
    <property type="component" value="Chromosome V"/>
</dbReference>
<dbReference type="Bgee" id="WBGene00015965">
    <property type="expression patterns" value="Expressed in larva and 3 other cell types or tissues"/>
</dbReference>
<dbReference type="GO" id="GO:0016020">
    <property type="term" value="C:membrane"/>
    <property type="evidence" value="ECO:0007669"/>
    <property type="project" value="UniProtKB-SubCell"/>
</dbReference>
<dbReference type="GO" id="GO:0005516">
    <property type="term" value="F:calmodulin binding"/>
    <property type="evidence" value="ECO:0007669"/>
    <property type="project" value="UniProtKB-KW"/>
</dbReference>
<dbReference type="GO" id="GO:0015020">
    <property type="term" value="F:glucuronosyltransferase activity"/>
    <property type="evidence" value="ECO:0007669"/>
    <property type="project" value="UniProtKB-EC"/>
</dbReference>
<dbReference type="GO" id="GO:0008194">
    <property type="term" value="F:UDP-glycosyltransferase activity"/>
    <property type="evidence" value="ECO:0000318"/>
    <property type="project" value="GO_Central"/>
</dbReference>
<dbReference type="CDD" id="cd03784">
    <property type="entry name" value="GT1_Gtf-like"/>
    <property type="match status" value="1"/>
</dbReference>
<dbReference type="FunFam" id="3.40.50.2000:FF:000021">
    <property type="entry name" value="UDP-glucuronosyltransferase"/>
    <property type="match status" value="1"/>
</dbReference>
<dbReference type="Gene3D" id="3.40.50.2000">
    <property type="entry name" value="Glycogen Phosphorylase B"/>
    <property type="match status" value="2"/>
</dbReference>
<dbReference type="InterPro" id="IPR050271">
    <property type="entry name" value="UDP-glycosyltransferase"/>
</dbReference>
<dbReference type="InterPro" id="IPR002213">
    <property type="entry name" value="UDP_glucos_trans"/>
</dbReference>
<dbReference type="InterPro" id="IPR035595">
    <property type="entry name" value="UDP_glycos_trans_CS"/>
</dbReference>
<dbReference type="PANTHER" id="PTHR48043">
    <property type="entry name" value="EG:EG0003.4 PROTEIN-RELATED"/>
    <property type="match status" value="1"/>
</dbReference>
<dbReference type="PANTHER" id="PTHR48043:SF1">
    <property type="entry name" value="UDP-GLUCURONOSYLTRANSFERASE UGT-48-RELATED"/>
    <property type="match status" value="1"/>
</dbReference>
<dbReference type="Pfam" id="PF00201">
    <property type="entry name" value="UDPGT"/>
    <property type="match status" value="1"/>
</dbReference>
<dbReference type="SUPFAM" id="SSF53756">
    <property type="entry name" value="UDP-Glycosyltransferase/glycogen phosphorylase"/>
    <property type="match status" value="1"/>
</dbReference>
<dbReference type="PROSITE" id="PS00375">
    <property type="entry name" value="UDPGT"/>
    <property type="match status" value="1"/>
</dbReference>
<protein>
    <recommendedName>
        <fullName>Putative UDP-glucuronosyltransferase ugt-48</fullName>
        <shortName>UDPGT 48</shortName>
        <ecNumber>2.4.1.17</ecNumber>
    </recommendedName>
</protein>
<sequence>MLLRILTFLAVCQVTTSHKILMFSPTASKSHMISQGRIADELANAGHEVVNFEPDFLNLTDKFVPCKKCRRWPVTGLNNYKFKKIQNGLSGDVFQQSSIWSKIFNTDSDPYQDEYTNMCEEMVTNKELIEKLKKEKFDAYFGEQIHLCGMGLAHLIGIKHRFWIASCTMSVSMRDSLGIPTPSSLIPFMSTLDATPAPFWQRAKNFVLQMAHIRDEYRDVVLTNDMFKKNFGSDFPCVEFLAKTSDLIFVSTDELLEIQAPTLSNVVHIGGLGLSSEGGGLDEKFVKIMEKGKGVILFSLGTIANTTNLPPTIMENLMKITQKFKDYEFIIKVDKFDRRSFDLAEGLSNVLVVDWVPQTAVLAHPRLKAFITHAGYNSLMESAYAGVPVILIPFMFDQPRNGRSVERKGWGILRDRFQLIKDPDAIEGAIKEILVNPTYQEKANRLKKLMRSKPQSASERLVKMTNWVLENDGVEELQYEGKHMDFFTFYNLDIIITAASIPVLIFIVLRISNISIITSSPKNKKD</sequence>